<proteinExistence type="inferred from homology"/>
<accession>Q3YVW2</accession>
<protein>
    <recommendedName>
        <fullName evidence="1">Mannitol-1-phosphate 5-dehydrogenase</fullName>
        <ecNumber evidence="1">1.1.1.17</ecNumber>
    </recommendedName>
</protein>
<name>MTLD_SHISS</name>
<gene>
    <name evidence="1" type="primary">mtlD</name>
    <name type="ordered locus">SSON_3808</name>
</gene>
<organism>
    <name type="scientific">Shigella sonnei (strain Ss046)</name>
    <dbReference type="NCBI Taxonomy" id="300269"/>
    <lineage>
        <taxon>Bacteria</taxon>
        <taxon>Pseudomonadati</taxon>
        <taxon>Pseudomonadota</taxon>
        <taxon>Gammaproteobacteria</taxon>
        <taxon>Enterobacterales</taxon>
        <taxon>Enterobacteriaceae</taxon>
        <taxon>Shigella</taxon>
    </lineage>
</organism>
<feature type="chain" id="PRO_1000011810" description="Mannitol-1-phosphate 5-dehydrogenase">
    <location>
        <begin position="1"/>
        <end position="382"/>
    </location>
</feature>
<feature type="binding site" evidence="1">
    <location>
        <begin position="3"/>
        <end position="14"/>
    </location>
    <ligand>
        <name>NAD(+)</name>
        <dbReference type="ChEBI" id="CHEBI:57540"/>
    </ligand>
</feature>
<feature type="modified residue" description="N6-acetyllysine" evidence="1">
    <location>
        <position position="269"/>
    </location>
</feature>
<evidence type="ECO:0000255" key="1">
    <source>
        <dbReference type="HAMAP-Rule" id="MF_00196"/>
    </source>
</evidence>
<comment type="catalytic activity">
    <reaction evidence="1">
        <text>D-mannitol 1-phosphate + NAD(+) = beta-D-fructose 6-phosphate + NADH + H(+)</text>
        <dbReference type="Rhea" id="RHEA:19661"/>
        <dbReference type="ChEBI" id="CHEBI:15378"/>
        <dbReference type="ChEBI" id="CHEBI:57540"/>
        <dbReference type="ChEBI" id="CHEBI:57634"/>
        <dbReference type="ChEBI" id="CHEBI:57945"/>
        <dbReference type="ChEBI" id="CHEBI:61381"/>
        <dbReference type="EC" id="1.1.1.17"/>
    </reaction>
</comment>
<comment type="similarity">
    <text evidence="1">Belongs to the mannitol dehydrogenase family.</text>
</comment>
<sequence>MKALHFGAGNIGRGFIGKLLADAGIQLTFADVNQVVLDALNARHSYQVHVVGETEQVDTVSGVNAVSSIGDDVVDLIAQVDLVTTAVGPVVLERIAPAIAKGLVKRKEQGNESPLNIIACENMVRGTTQLKGHVMNALPEDAKAWVEEHVGFVDSAVDRIVPPSASATNDPLEVTVETFSEWIVDKTQFKGALPNIPGMELTDNLMAFVERKLFTLNTGHAITAYLGKLAGHQTIRDAILDEKIRAVVKGAMEESGAVLIKRYGFDADKHAAYIQKILGRFENPYLKDDVERVGRQPLRKLSAGDRLIKPLLGTLEYSLPHKNLIQGIAGAMHFRSEDDPQAQELAALIADKGPQAALAQISDLDANSEVVSEAVTAYKAMQ</sequence>
<keyword id="KW-0007">Acetylation</keyword>
<keyword id="KW-0520">NAD</keyword>
<keyword id="KW-0560">Oxidoreductase</keyword>
<keyword id="KW-1185">Reference proteome</keyword>
<reference key="1">
    <citation type="journal article" date="2005" name="Nucleic Acids Res.">
        <title>Genome dynamics and diversity of Shigella species, the etiologic agents of bacillary dysentery.</title>
        <authorList>
            <person name="Yang F."/>
            <person name="Yang J."/>
            <person name="Zhang X."/>
            <person name="Chen L."/>
            <person name="Jiang Y."/>
            <person name="Yan Y."/>
            <person name="Tang X."/>
            <person name="Wang J."/>
            <person name="Xiong Z."/>
            <person name="Dong J."/>
            <person name="Xue Y."/>
            <person name="Zhu Y."/>
            <person name="Xu X."/>
            <person name="Sun L."/>
            <person name="Chen S."/>
            <person name="Nie H."/>
            <person name="Peng J."/>
            <person name="Xu J."/>
            <person name="Wang Y."/>
            <person name="Yuan Z."/>
            <person name="Wen Y."/>
            <person name="Yao Z."/>
            <person name="Shen Y."/>
            <person name="Qiang B."/>
            <person name="Hou Y."/>
            <person name="Yu J."/>
            <person name="Jin Q."/>
        </authorList>
    </citation>
    <scope>NUCLEOTIDE SEQUENCE [LARGE SCALE GENOMIC DNA]</scope>
    <source>
        <strain>Ss046</strain>
    </source>
</reference>
<dbReference type="EC" id="1.1.1.17" evidence="1"/>
<dbReference type="EMBL" id="CP000038">
    <property type="protein sequence ID" value="AAZ90350.1"/>
    <property type="molecule type" value="Genomic_DNA"/>
</dbReference>
<dbReference type="RefSeq" id="WP_000645423.1">
    <property type="nucleotide sequence ID" value="NC_007384.1"/>
</dbReference>
<dbReference type="SMR" id="Q3YVW2"/>
<dbReference type="GeneID" id="93778311"/>
<dbReference type="KEGG" id="ssn:SSON_3808"/>
<dbReference type="HOGENOM" id="CLU_036089_2_0_6"/>
<dbReference type="Proteomes" id="UP000002529">
    <property type="component" value="Chromosome"/>
</dbReference>
<dbReference type="GO" id="GO:0005829">
    <property type="term" value="C:cytosol"/>
    <property type="evidence" value="ECO:0007669"/>
    <property type="project" value="TreeGrafter"/>
</dbReference>
<dbReference type="GO" id="GO:0008926">
    <property type="term" value="F:mannitol-1-phosphate 5-dehydrogenase activity"/>
    <property type="evidence" value="ECO:0007669"/>
    <property type="project" value="UniProtKB-UniRule"/>
</dbReference>
<dbReference type="GO" id="GO:0019592">
    <property type="term" value="P:mannitol catabolic process"/>
    <property type="evidence" value="ECO:0007669"/>
    <property type="project" value="TreeGrafter"/>
</dbReference>
<dbReference type="FunFam" id="1.10.1040.10:FF:000009">
    <property type="entry name" value="Mannitol-1-phosphate 5-dehydrogenase"/>
    <property type="match status" value="1"/>
</dbReference>
<dbReference type="FunFam" id="3.40.50.720:FF:000075">
    <property type="entry name" value="Mannitol-1-phosphate 5-dehydrogenase"/>
    <property type="match status" value="1"/>
</dbReference>
<dbReference type="Gene3D" id="1.10.1040.10">
    <property type="entry name" value="N-(1-d-carboxylethyl)-l-norvaline Dehydrogenase, domain 2"/>
    <property type="match status" value="1"/>
</dbReference>
<dbReference type="Gene3D" id="3.40.50.720">
    <property type="entry name" value="NAD(P)-binding Rossmann-like Domain"/>
    <property type="match status" value="1"/>
</dbReference>
<dbReference type="HAMAP" id="MF_00196">
    <property type="entry name" value="Mannitol_dehydrog"/>
    <property type="match status" value="1"/>
</dbReference>
<dbReference type="InterPro" id="IPR008927">
    <property type="entry name" value="6-PGluconate_DH-like_C_sf"/>
</dbReference>
<dbReference type="InterPro" id="IPR013328">
    <property type="entry name" value="6PGD_dom2"/>
</dbReference>
<dbReference type="InterPro" id="IPR023028">
    <property type="entry name" value="Mannitol_1_phos_5_DH"/>
</dbReference>
<dbReference type="InterPro" id="IPR000669">
    <property type="entry name" value="Mannitol_DH"/>
</dbReference>
<dbReference type="InterPro" id="IPR013118">
    <property type="entry name" value="Mannitol_DH_C"/>
</dbReference>
<dbReference type="InterPro" id="IPR023027">
    <property type="entry name" value="Mannitol_DH_CS"/>
</dbReference>
<dbReference type="InterPro" id="IPR013131">
    <property type="entry name" value="Mannitol_DH_N"/>
</dbReference>
<dbReference type="InterPro" id="IPR036291">
    <property type="entry name" value="NAD(P)-bd_dom_sf"/>
</dbReference>
<dbReference type="NCBIfam" id="NF002646">
    <property type="entry name" value="PRK02318.1-2"/>
    <property type="match status" value="1"/>
</dbReference>
<dbReference type="NCBIfam" id="NF002647">
    <property type="entry name" value="PRK02318.1-3"/>
    <property type="match status" value="1"/>
</dbReference>
<dbReference type="NCBIfam" id="NF002648">
    <property type="entry name" value="PRK02318.1-4"/>
    <property type="match status" value="1"/>
</dbReference>
<dbReference type="NCBIfam" id="NF002650">
    <property type="entry name" value="PRK02318.2-2"/>
    <property type="match status" value="1"/>
</dbReference>
<dbReference type="NCBIfam" id="NF002652">
    <property type="entry name" value="PRK02318.2-5"/>
    <property type="match status" value="1"/>
</dbReference>
<dbReference type="PANTHER" id="PTHR30524:SF0">
    <property type="entry name" value="ALTRONATE OXIDOREDUCTASE-RELATED"/>
    <property type="match status" value="1"/>
</dbReference>
<dbReference type="PANTHER" id="PTHR30524">
    <property type="entry name" value="MANNITOL-1-PHOSPHATE 5-DEHYDROGENASE"/>
    <property type="match status" value="1"/>
</dbReference>
<dbReference type="Pfam" id="PF01232">
    <property type="entry name" value="Mannitol_dh"/>
    <property type="match status" value="1"/>
</dbReference>
<dbReference type="Pfam" id="PF08125">
    <property type="entry name" value="Mannitol_dh_C"/>
    <property type="match status" value="1"/>
</dbReference>
<dbReference type="PRINTS" id="PR00084">
    <property type="entry name" value="MTLDHDRGNASE"/>
</dbReference>
<dbReference type="SUPFAM" id="SSF48179">
    <property type="entry name" value="6-phosphogluconate dehydrogenase C-terminal domain-like"/>
    <property type="match status" value="1"/>
</dbReference>
<dbReference type="SUPFAM" id="SSF51735">
    <property type="entry name" value="NAD(P)-binding Rossmann-fold domains"/>
    <property type="match status" value="1"/>
</dbReference>
<dbReference type="PROSITE" id="PS00974">
    <property type="entry name" value="MANNITOL_DHGENASE"/>
    <property type="match status" value="1"/>
</dbReference>